<evidence type="ECO:0000255" key="1">
    <source>
        <dbReference type="PROSITE-ProRule" id="PRU00027"/>
    </source>
</evidence>
<accession>A4Z944</accession>
<protein>
    <recommendedName>
        <fullName>Zinc finger BED domain-containing protein 5</fullName>
    </recommendedName>
    <alternativeName>
        <fullName>Transposon-derived Buster1 transposase-like protein</fullName>
    </alternativeName>
</protein>
<gene>
    <name type="primary">ZBED5</name>
</gene>
<reference key="1">
    <citation type="submission" date="2006-04" db="EMBL/GenBank/DDBJ databases">
        <title>Human Buster genes have insect orthologs that are autonomous transposable elements.</title>
        <authorList>
            <person name="Arensburger P."/>
            <person name="Hice R.H."/>
            <person name="Zhou L."/>
            <person name="Smith R.C."/>
            <person name="O'Brochta D.A."/>
            <person name="Craig N.L."/>
            <person name="Atkinson P.W."/>
        </authorList>
    </citation>
    <scope>NUCLEOTIDE SEQUENCE [GENOMIC DNA]</scope>
</reference>
<organism>
    <name type="scientific">Canis lupus familiaris</name>
    <name type="common">Dog</name>
    <name type="synonym">Canis familiaris</name>
    <dbReference type="NCBI Taxonomy" id="9615"/>
    <lineage>
        <taxon>Eukaryota</taxon>
        <taxon>Metazoa</taxon>
        <taxon>Chordata</taxon>
        <taxon>Craniata</taxon>
        <taxon>Vertebrata</taxon>
        <taxon>Euteleostomi</taxon>
        <taxon>Mammalia</taxon>
        <taxon>Eutheria</taxon>
        <taxon>Laurasiatheria</taxon>
        <taxon>Carnivora</taxon>
        <taxon>Caniformia</taxon>
        <taxon>Canidae</taxon>
        <taxon>Canis</taxon>
    </lineage>
</organism>
<comment type="miscellaneous">
    <text>May be derived from an ancient transposon that has lost its ability to translocate.</text>
</comment>
<sequence>MIAHLLCILSYNFNTSVILNVYSKLTMFCTTNTLPMDLLLKQGSLKQEVESFCYQIVSESNDQKVGILQSENEQLQPSVSKKSEGELSRVKFMSSSNKITTFSKKPKRRKYDESYLSFGFTYFGNRDAPHAQCVLCKKILSNSSLAPSKLRRHLETKHAAYKDKDISFFKQHLDSPENNKPPTPKIVNTDNESATEASYNVSYHIALSGEAHTIGELLIKPCAKDVVMRMFDEQYSKKIDAVQLSNSTVARRIKDLAADIEEELVCRLKICDGFSLQLDESADVSGLAVLLVFVRYRFNKSIEEDLLLCESLQSNATGEEIFNCINSFMQKHEIEWEKCVDVCSDASRAMDGKIAEAVTLIKYVAPESTSSHCLLYRHALAVKIMPTSLKNVLDQAVQIINYIKARPHQSRLLKILCEEMGAQHTALLLNTEVRWLSRGKVLVRLFELRRELLVFMDSAFRLSDCLTNSSWLLRLAYLADIFTKLNEVNLSMQGKNVTVFTVFDKMSSLLRKLEFWASSVEEENFDCFPTLSDFLTEINSTVDKDICSAIVQHLRGLRSTLLKYFPVTNDNNTWVRNPFTVTVKPASLVARDYESLIDLTSDSQVKQNFSELSLNDFWSSLIQEYPSIARRAVRVLLPFATMHLCETGFSYYAATKTKYRKRLDAAPHMRIRLSNITPNIKRICDKKTQKHCSH</sequence>
<feature type="chain" id="PRO_0000291957" description="Zinc finger BED domain-containing protein 5">
    <location>
        <begin position="1"/>
        <end position="694"/>
    </location>
</feature>
<feature type="zinc finger region" description="BED-type" evidence="1">
    <location>
        <begin position="109"/>
        <end position="165"/>
    </location>
</feature>
<feature type="binding site" evidence="1">
    <location>
        <position position="133"/>
    </location>
    <ligand>
        <name>Zn(2+)</name>
        <dbReference type="ChEBI" id="CHEBI:29105"/>
    </ligand>
</feature>
<feature type="binding site" evidence="1">
    <location>
        <position position="136"/>
    </location>
    <ligand>
        <name>Zn(2+)</name>
        <dbReference type="ChEBI" id="CHEBI:29105"/>
    </ligand>
</feature>
<feature type="binding site" evidence="1">
    <location>
        <position position="153"/>
    </location>
    <ligand>
        <name>Zn(2+)</name>
        <dbReference type="ChEBI" id="CHEBI:29105"/>
    </ligand>
</feature>
<feature type="binding site" evidence="1">
    <location>
        <position position="158"/>
    </location>
    <ligand>
        <name>Zn(2+)</name>
        <dbReference type="ChEBI" id="CHEBI:29105"/>
    </ligand>
</feature>
<proteinExistence type="predicted"/>
<name>ZBED5_CANLF</name>
<dbReference type="EMBL" id="DQ486151">
    <property type="protein sequence ID" value="ABF22696.1"/>
    <property type="molecule type" value="Genomic_DNA"/>
</dbReference>
<dbReference type="RefSeq" id="NP_001091451.1">
    <property type="nucleotide sequence ID" value="NM_001097982.2"/>
</dbReference>
<dbReference type="RefSeq" id="XP_005633360.1">
    <property type="nucleotide sequence ID" value="XM_005633303.2"/>
</dbReference>
<dbReference type="RefSeq" id="XP_005633363.1">
    <property type="nucleotide sequence ID" value="XM_005633306.2"/>
</dbReference>
<dbReference type="RefSeq" id="XP_005633364.1">
    <property type="nucleotide sequence ID" value="XM_005633307.2"/>
</dbReference>
<dbReference type="RefSeq" id="XP_005633365.1">
    <property type="nucleotide sequence ID" value="XM_005633308.2"/>
</dbReference>
<dbReference type="RefSeq" id="XP_013977912.1">
    <property type="nucleotide sequence ID" value="XM_014122437.1"/>
</dbReference>
<dbReference type="RefSeq" id="XP_038285441.1">
    <property type="nucleotide sequence ID" value="XM_038429513.1"/>
</dbReference>
<dbReference type="RefSeq" id="XP_038285442.1">
    <property type="nucleotide sequence ID" value="XM_038429514.1"/>
</dbReference>
<dbReference type="RefSeq" id="XP_038285443.1">
    <property type="nucleotide sequence ID" value="XM_038429515.1"/>
</dbReference>
<dbReference type="RefSeq" id="XP_038285444.1">
    <property type="nucleotide sequence ID" value="XM_038429516.1"/>
</dbReference>
<dbReference type="RefSeq" id="XP_038285445.1">
    <property type="nucleotide sequence ID" value="XM_038429517.1"/>
</dbReference>
<dbReference type="RefSeq" id="XP_038285446.1">
    <property type="nucleotide sequence ID" value="XM_038429518.1"/>
</dbReference>
<dbReference type="RefSeq" id="XP_038285447.1">
    <property type="nucleotide sequence ID" value="XM_038429519.1"/>
</dbReference>
<dbReference type="RefSeq" id="XP_038285448.1">
    <property type="nucleotide sequence ID" value="XM_038429520.1"/>
</dbReference>
<dbReference type="FunCoup" id="A4Z944">
    <property type="interactions" value="49"/>
</dbReference>
<dbReference type="PaxDb" id="9612-ENSCAFP00000038465"/>
<dbReference type="Ensembl" id="ENSCAFT00000049851.2">
    <property type="protein sequence ID" value="ENSCAFP00000038465.1"/>
    <property type="gene ID" value="ENSCAFG00000028815.2"/>
</dbReference>
<dbReference type="Ensembl" id="ENSCAFT00040029946.1">
    <property type="protein sequence ID" value="ENSCAFP00040026016.1"/>
    <property type="gene ID" value="ENSCAFG00040016254.1"/>
</dbReference>
<dbReference type="Ensembl" id="ENSCAFT00845027593.1">
    <property type="protein sequence ID" value="ENSCAFP00845021711.1"/>
    <property type="gene ID" value="ENSCAFG00845015479.1"/>
</dbReference>
<dbReference type="GeneID" id="612956"/>
<dbReference type="KEGG" id="cfa:612956"/>
<dbReference type="CTD" id="58486"/>
<dbReference type="VEuPathDB" id="HostDB:ENSCAFG00845015479"/>
<dbReference type="VGNC" id="VGNC:48515">
    <property type="gene designation" value="ZBED5"/>
</dbReference>
<dbReference type="eggNOG" id="ENOG502QT83">
    <property type="taxonomic scope" value="Eukaryota"/>
</dbReference>
<dbReference type="GeneTree" id="ENSGT00940000162521"/>
<dbReference type="HOGENOM" id="CLU_021316_5_0_1"/>
<dbReference type="InParanoid" id="A4Z944"/>
<dbReference type="OMA" id="CSKLTMF"/>
<dbReference type="OrthoDB" id="1101576at2759"/>
<dbReference type="TreeFam" id="TF328297"/>
<dbReference type="Proteomes" id="UP000002254">
    <property type="component" value="Chromosome 21"/>
</dbReference>
<dbReference type="Proteomes" id="UP000694429">
    <property type="component" value="Unplaced"/>
</dbReference>
<dbReference type="Proteomes" id="UP000694542">
    <property type="component" value="Chromosome 21"/>
</dbReference>
<dbReference type="Proteomes" id="UP000805418">
    <property type="component" value="Chromosome 21"/>
</dbReference>
<dbReference type="Bgee" id="ENSCAFG00000028815">
    <property type="expression patterns" value="Expressed in cardiac muscle of left ventricle and 45 other cell types or tissues"/>
</dbReference>
<dbReference type="GO" id="GO:0003677">
    <property type="term" value="F:DNA binding"/>
    <property type="evidence" value="ECO:0007669"/>
    <property type="project" value="InterPro"/>
</dbReference>
<dbReference type="GO" id="GO:0008270">
    <property type="term" value="F:zinc ion binding"/>
    <property type="evidence" value="ECO:0007669"/>
    <property type="project" value="UniProtKB-KW"/>
</dbReference>
<dbReference type="InterPro" id="IPR012337">
    <property type="entry name" value="RNaseH-like_sf"/>
</dbReference>
<dbReference type="InterPro" id="IPR003656">
    <property type="entry name" value="Znf_BED"/>
</dbReference>
<dbReference type="PANTHER" id="PTHR45913">
    <property type="entry name" value="EPM2A-INTERACTING PROTEIN 1"/>
    <property type="match status" value="1"/>
</dbReference>
<dbReference type="PANTHER" id="PTHR45913:SF19">
    <property type="entry name" value="LOW QUALITY PROTEIN: ZINC FINGER BED DOMAIN-CONTAINING PROTEIN 5-LIKE"/>
    <property type="match status" value="1"/>
</dbReference>
<dbReference type="Pfam" id="PF02892">
    <property type="entry name" value="zf-BED"/>
    <property type="match status" value="1"/>
</dbReference>
<dbReference type="SUPFAM" id="SSF53098">
    <property type="entry name" value="Ribonuclease H-like"/>
    <property type="match status" value="1"/>
</dbReference>
<dbReference type="PROSITE" id="PS50808">
    <property type="entry name" value="ZF_BED"/>
    <property type="match status" value="1"/>
</dbReference>
<keyword id="KW-0479">Metal-binding</keyword>
<keyword id="KW-1185">Reference proteome</keyword>
<keyword id="KW-0862">Zinc</keyword>
<keyword id="KW-0863">Zinc-finger</keyword>